<proteinExistence type="inferred from homology"/>
<reference key="1">
    <citation type="journal article" date="2001" name="Nature">
        <title>Genome sequence of enterohaemorrhagic Escherichia coli O157:H7.</title>
        <authorList>
            <person name="Perna N.T."/>
            <person name="Plunkett G. III"/>
            <person name="Burland V."/>
            <person name="Mau B."/>
            <person name="Glasner J.D."/>
            <person name="Rose D.J."/>
            <person name="Mayhew G.F."/>
            <person name="Evans P.S."/>
            <person name="Gregor J."/>
            <person name="Kirkpatrick H.A."/>
            <person name="Posfai G."/>
            <person name="Hackett J."/>
            <person name="Klink S."/>
            <person name="Boutin A."/>
            <person name="Shao Y."/>
            <person name="Miller L."/>
            <person name="Grotbeck E.J."/>
            <person name="Davis N.W."/>
            <person name="Lim A."/>
            <person name="Dimalanta E.T."/>
            <person name="Potamousis K."/>
            <person name="Apodaca J."/>
            <person name="Anantharaman T.S."/>
            <person name="Lin J."/>
            <person name="Yen G."/>
            <person name="Schwartz D.C."/>
            <person name="Welch R.A."/>
            <person name="Blattner F.R."/>
        </authorList>
    </citation>
    <scope>NUCLEOTIDE SEQUENCE [LARGE SCALE GENOMIC DNA]</scope>
    <source>
        <strain>O157:H7 / EDL933 / ATCC 700927 / EHEC</strain>
    </source>
</reference>
<reference key="2">
    <citation type="journal article" date="2001" name="DNA Res.">
        <title>Complete genome sequence of enterohemorrhagic Escherichia coli O157:H7 and genomic comparison with a laboratory strain K-12.</title>
        <authorList>
            <person name="Hayashi T."/>
            <person name="Makino K."/>
            <person name="Ohnishi M."/>
            <person name="Kurokawa K."/>
            <person name="Ishii K."/>
            <person name="Yokoyama K."/>
            <person name="Han C.-G."/>
            <person name="Ohtsubo E."/>
            <person name="Nakayama K."/>
            <person name="Murata T."/>
            <person name="Tanaka M."/>
            <person name="Tobe T."/>
            <person name="Iida T."/>
            <person name="Takami H."/>
            <person name="Honda T."/>
            <person name="Sasakawa C."/>
            <person name="Ogasawara N."/>
            <person name="Yasunaga T."/>
            <person name="Kuhara S."/>
            <person name="Shiba T."/>
            <person name="Hattori M."/>
            <person name="Shinagawa H."/>
        </authorList>
    </citation>
    <scope>NUCLEOTIDE SEQUENCE [LARGE SCALE GENOMIC DNA]</scope>
    <source>
        <strain>O157:H7 / Sakai / RIMD 0509952 / EHEC</strain>
    </source>
</reference>
<comment type="function">
    <text evidence="1">Involved in SOS regulation. Inhibits RecA by preventing RecA to bind ssDNA. Can displace ssDNA from RecA (By similarity).</text>
</comment>
<comment type="similarity">
    <text evidence="2">Belongs to the DinI family.</text>
</comment>
<accession>P0ABR3</accession>
<accession>Q47143</accession>
<accession>Q9R2Y7</accession>
<name>DINI_ECO57</name>
<organism>
    <name type="scientific">Escherichia coli O157:H7</name>
    <dbReference type="NCBI Taxonomy" id="83334"/>
    <lineage>
        <taxon>Bacteria</taxon>
        <taxon>Pseudomonadati</taxon>
        <taxon>Pseudomonadota</taxon>
        <taxon>Gammaproteobacteria</taxon>
        <taxon>Enterobacterales</taxon>
        <taxon>Enterobacteriaceae</taxon>
        <taxon>Escherichia</taxon>
    </lineage>
</organism>
<sequence length="81" mass="8949">MRIEVTIAKTSPLPAGAIDALAGELSRRIQYAFPDNEGHVSVRYAAANNLSVIGATKEDKQRISEILQETWESADDWFVSE</sequence>
<gene>
    <name type="primary">dinI</name>
    <name type="ordered locus">Z1698</name>
    <name type="ordered locus">ECs1439</name>
</gene>
<keyword id="KW-0227">DNA damage</keyword>
<keyword id="KW-0234">DNA repair</keyword>
<keyword id="KW-1185">Reference proteome</keyword>
<keyword id="KW-0742">SOS response</keyword>
<feature type="chain" id="PRO_0000201636" description="DNA damage-inducible protein I">
    <location>
        <begin position="1"/>
        <end position="81"/>
    </location>
</feature>
<evidence type="ECO:0000250" key="1"/>
<evidence type="ECO:0000305" key="2"/>
<dbReference type="EMBL" id="AE005174">
    <property type="protein sequence ID" value="AAG55807.1"/>
    <property type="molecule type" value="Genomic_DNA"/>
</dbReference>
<dbReference type="EMBL" id="BA000007">
    <property type="protein sequence ID" value="BAB34862.1"/>
    <property type="molecule type" value="Genomic_DNA"/>
</dbReference>
<dbReference type="PIR" id="C85668">
    <property type="entry name" value="C85668"/>
</dbReference>
<dbReference type="PIR" id="G90808">
    <property type="entry name" value="G90808"/>
</dbReference>
<dbReference type="RefSeq" id="WP_001217754.1">
    <property type="nucleotide sequence ID" value="NZ_VOAI01000018.1"/>
</dbReference>
<dbReference type="SMR" id="P0ABR3"/>
<dbReference type="STRING" id="155864.Z1698"/>
<dbReference type="GeneID" id="93776346"/>
<dbReference type="KEGG" id="ece:Z1698"/>
<dbReference type="KEGG" id="ecs:ECs_1439"/>
<dbReference type="PATRIC" id="fig|386585.9.peg.1540"/>
<dbReference type="eggNOG" id="ENOG5032TF2">
    <property type="taxonomic scope" value="Bacteria"/>
</dbReference>
<dbReference type="HOGENOM" id="CLU_139795_1_0_6"/>
<dbReference type="OMA" id="MTPWCHS"/>
<dbReference type="Proteomes" id="UP000000558">
    <property type="component" value="Chromosome"/>
</dbReference>
<dbReference type="Proteomes" id="UP000002519">
    <property type="component" value="Chromosome"/>
</dbReference>
<dbReference type="GO" id="GO:0006281">
    <property type="term" value="P:DNA repair"/>
    <property type="evidence" value="ECO:0007669"/>
    <property type="project" value="UniProtKB-KW"/>
</dbReference>
<dbReference type="GO" id="GO:0009432">
    <property type="term" value="P:SOS response"/>
    <property type="evidence" value="ECO:0007669"/>
    <property type="project" value="UniProtKB-KW"/>
</dbReference>
<dbReference type="FunFam" id="3.30.910.10:FF:000001">
    <property type="entry name" value="DNA damage-inducible protein I"/>
    <property type="match status" value="1"/>
</dbReference>
<dbReference type="Gene3D" id="3.30.910.10">
    <property type="entry name" value="DinI-like"/>
    <property type="match status" value="1"/>
</dbReference>
<dbReference type="InterPro" id="IPR036687">
    <property type="entry name" value="DinI-like_sf"/>
</dbReference>
<dbReference type="InterPro" id="IPR010391">
    <property type="entry name" value="DNA_damage-inducible_DinI-like"/>
</dbReference>
<dbReference type="NCBIfam" id="NF007893">
    <property type="entry name" value="PRK10597.1"/>
    <property type="match status" value="1"/>
</dbReference>
<dbReference type="PANTHER" id="PTHR36572:SF2">
    <property type="entry name" value="DNA DAMAGE-INDUCIBLE PROTEIN I"/>
    <property type="match status" value="1"/>
</dbReference>
<dbReference type="PANTHER" id="PTHR36572">
    <property type="entry name" value="DNA DAMAGE-INDUCIBLE PROTEIN I-RELATED"/>
    <property type="match status" value="1"/>
</dbReference>
<dbReference type="Pfam" id="PF06183">
    <property type="entry name" value="DinI"/>
    <property type="match status" value="1"/>
</dbReference>
<dbReference type="SUPFAM" id="SSF54857">
    <property type="entry name" value="DNA damage-inducible protein DinI"/>
    <property type="match status" value="1"/>
</dbReference>
<protein>
    <recommendedName>
        <fullName>DNA damage-inducible protein I</fullName>
    </recommendedName>
</protein>